<reference key="1">
    <citation type="journal article" date="1991" name="Proc. Natl. Acad. Sci. U.S.A.">
        <title>Nucleotide sequence analysis of Adh genes estimates the time of geographic isolation of the Bogota population of Drosophila pseudoobscura.</title>
        <authorList>
            <person name="Schaeffer S.W."/>
            <person name="Miller E.L."/>
        </authorList>
    </citation>
    <scope>NUCLEOTIDE SEQUENCE [GENOMIC DNA]</scope>
</reference>
<reference key="2">
    <citation type="journal article" date="1997" name="Genetics">
        <title>Gene flow and natural selection in the origin of Drosophila pseudoobscura and close relatives.</title>
        <authorList>
            <person name="Wang R.L."/>
            <person name="Wakeley J."/>
            <person name="Hey J."/>
        </authorList>
    </citation>
    <scope>NUCLEOTIDE SEQUENCE [GENOMIC DNA]</scope>
    <scope>VARIANTS LEU-82 AND LYS-185</scope>
    <source>
        <strain>Persimi40</strain>
        <strain>Persimi42</strain>
        <strain>Persimi44</strain>
        <strain>Persimi49</strain>
        <strain>Persimi50</strain>
    </source>
</reference>
<reference key="3">
    <citation type="journal article" date="2007" name="Nature">
        <title>Evolution of genes and genomes on the Drosophila phylogeny.</title>
        <authorList>
            <consortium name="Drosophila 12 genomes consortium"/>
        </authorList>
    </citation>
    <scope>NUCLEOTIDE SEQUENCE [LARGE SCALE GENOMIC DNA]</scope>
    <source>
        <strain>MSH-3 / Tucson 14011-0111.49</strain>
    </source>
</reference>
<accession>P37473</accession>
<accession>B4GK27</accession>
<accession>O16093</accession>
<accession>O16095</accession>
<accession>O16097</accession>
<accession>O18661</accession>
<accession>Q7KQD6</accession>
<accession>Q7KQD7</accession>
<accession>Q7KQD8</accession>
<sequence length="254" mass="27645">MSLTNKNVVFVAGLGGIGLDTSRELVKRNLKNLVILDRIDNPAAIAELKAINPKVTITFYPYDVTVPVAETTKLLKTIFAQVKTIDVLINGAGILDDHQIERTIAVNYTGLVNTTTAILDFWDKRKGGPGGIICNIGSVTGFNAIYQVPVYSGSKAAVVNFTSSLAKLAPITGVTAYTVNPGITRTTLVHKFNSWLDVEPRVAEKLLEHPTQTSQQCAENFVKAIELNKNGAIWKLDLGTLEPITWTQHWDSGI</sequence>
<proteinExistence type="inferred from homology"/>
<feature type="initiator methionine" description="Removed" evidence="1">
    <location>
        <position position="1"/>
    </location>
</feature>
<feature type="chain" id="PRO_0000054488" description="Alcohol dehydrogenase">
    <location>
        <begin position="2"/>
        <end position="254"/>
    </location>
</feature>
<feature type="active site" description="Proton acceptor" evidence="2">
    <location>
        <position position="151"/>
    </location>
</feature>
<feature type="binding site" evidence="1">
    <location>
        <begin position="10"/>
        <end position="33"/>
    </location>
    <ligand>
        <name>NAD(+)</name>
        <dbReference type="ChEBI" id="CHEBI:57540"/>
    </ligand>
</feature>
<feature type="binding site" evidence="1">
    <location>
        <position position="138"/>
    </location>
    <ligand>
        <name>substrate</name>
    </ligand>
</feature>
<feature type="sequence variant" description="In strain: Persimi50." evidence="3">
    <original>V</original>
    <variation>L</variation>
    <location>
        <position position="82"/>
    </location>
</feature>
<feature type="sequence variant" description="In strain: Persimi44." evidence="3">
    <original>R</original>
    <variation>K</variation>
    <location>
        <position position="185"/>
    </location>
</feature>
<feature type="sequence conflict" description="In Ref. 2; AAB80702/AAB80704/AAB80706/AAB80708/AAB80710." evidence="4" ref="2">
    <original>G</original>
    <variation>A</variation>
    <location>
        <position position="16"/>
    </location>
</feature>
<comment type="catalytic activity">
    <reaction evidence="2">
        <text>a primary alcohol + NAD(+) = an aldehyde + NADH + H(+)</text>
        <dbReference type="Rhea" id="RHEA:10736"/>
        <dbReference type="ChEBI" id="CHEBI:15378"/>
        <dbReference type="ChEBI" id="CHEBI:15734"/>
        <dbReference type="ChEBI" id="CHEBI:17478"/>
        <dbReference type="ChEBI" id="CHEBI:57540"/>
        <dbReference type="ChEBI" id="CHEBI:57945"/>
        <dbReference type="EC" id="1.1.1.1"/>
    </reaction>
</comment>
<comment type="catalytic activity">
    <reaction evidence="2">
        <text>a secondary alcohol + NAD(+) = a ketone + NADH + H(+)</text>
        <dbReference type="Rhea" id="RHEA:10740"/>
        <dbReference type="ChEBI" id="CHEBI:15378"/>
        <dbReference type="ChEBI" id="CHEBI:17087"/>
        <dbReference type="ChEBI" id="CHEBI:35681"/>
        <dbReference type="ChEBI" id="CHEBI:57540"/>
        <dbReference type="ChEBI" id="CHEBI:57945"/>
        <dbReference type="EC" id="1.1.1.1"/>
    </reaction>
</comment>
<comment type="subunit">
    <text>Homodimer.</text>
</comment>
<comment type="similarity">
    <text evidence="4">Belongs to the short-chain dehydrogenases/reductases (SDR) family.</text>
</comment>
<comment type="sequence caution" evidence="4">
    <conflict type="frameshift">
        <sequence resource="EMBL-CDS" id="AAB80702"/>
    </conflict>
</comment>
<comment type="sequence caution" evidence="4">
    <conflict type="frameshift">
        <sequence resource="EMBL-CDS" id="AAB80704"/>
    </conflict>
</comment>
<comment type="sequence caution" evidence="4">
    <conflict type="frameshift">
        <sequence resource="EMBL-CDS" id="AAB80708"/>
    </conflict>
</comment>
<comment type="sequence caution" evidence="4">
    <conflict type="frameshift">
        <sequence resource="EMBL-CDS" id="AAB80710"/>
    </conflict>
</comment>
<organism>
    <name type="scientific">Drosophila persimilis</name>
    <name type="common">Fruit fly</name>
    <dbReference type="NCBI Taxonomy" id="7234"/>
    <lineage>
        <taxon>Eukaryota</taxon>
        <taxon>Metazoa</taxon>
        <taxon>Ecdysozoa</taxon>
        <taxon>Arthropoda</taxon>
        <taxon>Hexapoda</taxon>
        <taxon>Insecta</taxon>
        <taxon>Pterygota</taxon>
        <taxon>Neoptera</taxon>
        <taxon>Endopterygota</taxon>
        <taxon>Diptera</taxon>
        <taxon>Brachycera</taxon>
        <taxon>Muscomorpha</taxon>
        <taxon>Ephydroidea</taxon>
        <taxon>Drosophilidae</taxon>
        <taxon>Drosophila</taxon>
        <taxon>Sophophora</taxon>
    </lineage>
</organism>
<keyword id="KW-0520">NAD</keyword>
<keyword id="KW-0560">Oxidoreductase</keyword>
<keyword id="KW-1185">Reference proteome</keyword>
<protein>
    <recommendedName>
        <fullName>Alcohol dehydrogenase</fullName>
        <ecNumber>1.1.1.1</ecNumber>
    </recommendedName>
</protein>
<name>ADH_DROPE</name>
<evidence type="ECO:0000250" key="1"/>
<evidence type="ECO:0000255" key="2">
    <source>
        <dbReference type="PROSITE-ProRule" id="PRU10001"/>
    </source>
</evidence>
<evidence type="ECO:0000269" key="3">
    <source>
    </source>
</evidence>
<evidence type="ECO:0000305" key="4"/>
<gene>
    <name type="primary">Adh</name>
    <name type="ORF">GL25993</name>
</gene>
<dbReference type="EC" id="1.1.1.1"/>
<dbReference type="EMBL" id="M60997">
    <property type="protein sequence ID" value="AAA99035.1"/>
    <property type="molecule type" value="Genomic_DNA"/>
</dbReference>
<dbReference type="EMBL" id="AF006564">
    <property type="protein sequence ID" value="AAB80702.1"/>
    <property type="status" value="ALT_FRAME"/>
    <property type="molecule type" value="Genomic_DNA"/>
</dbReference>
<dbReference type="EMBL" id="AF006565">
    <property type="protein sequence ID" value="AAB80704.1"/>
    <property type="status" value="ALT_FRAME"/>
    <property type="molecule type" value="Genomic_DNA"/>
</dbReference>
<dbReference type="EMBL" id="AF006566">
    <property type="protein sequence ID" value="AAB80706.1"/>
    <property type="molecule type" value="Genomic_DNA"/>
</dbReference>
<dbReference type="EMBL" id="AF006567">
    <property type="protein sequence ID" value="AAB80708.1"/>
    <property type="status" value="ALT_FRAME"/>
    <property type="molecule type" value="Genomic_DNA"/>
</dbReference>
<dbReference type="EMBL" id="AF006568">
    <property type="protein sequence ID" value="AAB80710.1"/>
    <property type="status" value="ALT_FRAME"/>
    <property type="molecule type" value="Genomic_DNA"/>
</dbReference>
<dbReference type="EMBL" id="CH479184">
    <property type="protein sequence ID" value="EDW36993.1"/>
    <property type="molecule type" value="Genomic_DNA"/>
</dbReference>
<dbReference type="PIR" id="S26784">
    <property type="entry name" value="S26784"/>
</dbReference>
<dbReference type="RefSeq" id="XP_002018797.1">
    <property type="nucleotide sequence ID" value="XM_002018761.1"/>
</dbReference>
<dbReference type="SMR" id="P37473"/>
<dbReference type="STRING" id="7234.P37473"/>
<dbReference type="EnsemblMetazoa" id="FBtr0191608">
    <property type="protein sequence ID" value="FBpp0190100"/>
    <property type="gene ID" value="FBgn0012635"/>
</dbReference>
<dbReference type="EnsemblMetazoa" id="XM_002018761.2">
    <property type="protein sequence ID" value="XP_002018797.2"/>
    <property type="gene ID" value="LOC6593284"/>
</dbReference>
<dbReference type="GeneID" id="6593284"/>
<dbReference type="KEGG" id="dpe:6593284"/>
<dbReference type="eggNOG" id="KOG4169">
    <property type="taxonomic scope" value="Eukaryota"/>
</dbReference>
<dbReference type="HOGENOM" id="CLU_010194_2_16_1"/>
<dbReference type="OMA" id="WSKHWDS"/>
<dbReference type="OrthoDB" id="417891at2759"/>
<dbReference type="PhylomeDB" id="P37473"/>
<dbReference type="ChiTaRS" id="Adh">
    <property type="organism name" value="fly"/>
</dbReference>
<dbReference type="Proteomes" id="UP000008744">
    <property type="component" value="Unassembled WGS sequence"/>
</dbReference>
<dbReference type="GO" id="GO:0005829">
    <property type="term" value="C:cytosol"/>
    <property type="evidence" value="ECO:0007669"/>
    <property type="project" value="EnsemblMetazoa"/>
</dbReference>
<dbReference type="GO" id="GO:0004022">
    <property type="term" value="F:alcohol dehydrogenase (NAD+) activity"/>
    <property type="evidence" value="ECO:0007669"/>
    <property type="project" value="UniProtKB-EC"/>
</dbReference>
<dbReference type="GO" id="GO:0004029">
    <property type="term" value="F:aldehyde dehydrogenase (NAD+) activity"/>
    <property type="evidence" value="ECO:0007669"/>
    <property type="project" value="EnsemblMetazoa"/>
</dbReference>
<dbReference type="GO" id="GO:0042803">
    <property type="term" value="F:protein homodimerization activity"/>
    <property type="evidence" value="ECO:0007669"/>
    <property type="project" value="EnsemblMetazoa"/>
</dbReference>
<dbReference type="GO" id="GO:0006117">
    <property type="term" value="P:acetaldehyde metabolic process"/>
    <property type="evidence" value="ECO:0007669"/>
    <property type="project" value="EnsemblMetazoa"/>
</dbReference>
<dbReference type="GO" id="GO:0019431">
    <property type="term" value="P:acetyl-CoA biosynthetic process from ethanol"/>
    <property type="evidence" value="ECO:0007669"/>
    <property type="project" value="EnsemblMetazoa"/>
</dbReference>
<dbReference type="GO" id="GO:0046164">
    <property type="term" value="P:alcohol catabolic process"/>
    <property type="evidence" value="ECO:0007669"/>
    <property type="project" value="EnsemblMetazoa"/>
</dbReference>
<dbReference type="GO" id="GO:0048149">
    <property type="term" value="P:behavioral response to ethanol"/>
    <property type="evidence" value="ECO:0007669"/>
    <property type="project" value="EnsemblMetazoa"/>
</dbReference>
<dbReference type="GO" id="GO:0006734">
    <property type="term" value="P:NADH metabolic process"/>
    <property type="evidence" value="ECO:0007669"/>
    <property type="project" value="EnsemblMetazoa"/>
</dbReference>
<dbReference type="CDD" id="cd05323">
    <property type="entry name" value="ADH_SDR_c_like"/>
    <property type="match status" value="1"/>
</dbReference>
<dbReference type="FunFam" id="3.40.50.720:FF:000302">
    <property type="entry name" value="Alcohol dehydrogenase"/>
    <property type="match status" value="1"/>
</dbReference>
<dbReference type="Gene3D" id="3.40.50.720">
    <property type="entry name" value="NAD(P)-binding Rossmann-like Domain"/>
    <property type="match status" value="1"/>
</dbReference>
<dbReference type="InterPro" id="IPR002425">
    <property type="entry name" value="ADH_Drosophila-type"/>
</dbReference>
<dbReference type="InterPro" id="IPR036291">
    <property type="entry name" value="NAD(P)-bd_dom_sf"/>
</dbReference>
<dbReference type="InterPro" id="IPR020904">
    <property type="entry name" value="Sc_DH/Rdtase_CS"/>
</dbReference>
<dbReference type="InterPro" id="IPR002347">
    <property type="entry name" value="SDR_fam"/>
</dbReference>
<dbReference type="PANTHER" id="PTHR42901">
    <property type="entry name" value="ALCOHOL DEHYDROGENASE"/>
    <property type="match status" value="1"/>
</dbReference>
<dbReference type="PANTHER" id="PTHR42901:SF1">
    <property type="entry name" value="ALCOHOL DEHYDROGENASE"/>
    <property type="match status" value="1"/>
</dbReference>
<dbReference type="Pfam" id="PF00106">
    <property type="entry name" value="adh_short"/>
    <property type="match status" value="1"/>
</dbReference>
<dbReference type="PRINTS" id="PR01168">
    <property type="entry name" value="ALCDHDRGNASE"/>
</dbReference>
<dbReference type="PRINTS" id="PR01167">
    <property type="entry name" value="INSADHFAMILY"/>
</dbReference>
<dbReference type="PRINTS" id="PR00080">
    <property type="entry name" value="SDRFAMILY"/>
</dbReference>
<dbReference type="SUPFAM" id="SSF51735">
    <property type="entry name" value="NAD(P)-binding Rossmann-fold domains"/>
    <property type="match status" value="1"/>
</dbReference>
<dbReference type="PROSITE" id="PS00061">
    <property type="entry name" value="ADH_SHORT"/>
    <property type="match status" value="1"/>
</dbReference>